<accession>Q60279</accession>
<gene>
    <name type="ordered locus">MJECL19</name>
</gene>
<feature type="chain" id="PRO_0000107507" description="Uncharacterized protein MJECL19">
    <location>
        <begin position="1"/>
        <end position="174"/>
    </location>
</feature>
<reference key="1">
    <citation type="journal article" date="1996" name="Science">
        <title>Complete genome sequence of the methanogenic archaeon, Methanococcus jannaschii.</title>
        <authorList>
            <person name="Bult C.J."/>
            <person name="White O."/>
            <person name="Olsen G.J."/>
            <person name="Zhou L."/>
            <person name="Fleischmann R.D."/>
            <person name="Sutton G.G."/>
            <person name="Blake J.A."/>
            <person name="FitzGerald L.M."/>
            <person name="Clayton R.A."/>
            <person name="Gocayne J.D."/>
            <person name="Kerlavage A.R."/>
            <person name="Dougherty B.A."/>
            <person name="Tomb J.-F."/>
            <person name="Adams M.D."/>
            <person name="Reich C.I."/>
            <person name="Overbeek R."/>
            <person name="Kirkness E.F."/>
            <person name="Weinstock K.G."/>
            <person name="Merrick J.M."/>
            <person name="Glodek A."/>
            <person name="Scott J.L."/>
            <person name="Geoghagen N.S.M."/>
            <person name="Weidman J.F."/>
            <person name="Fuhrmann J.L."/>
            <person name="Nguyen D."/>
            <person name="Utterback T.R."/>
            <person name="Kelley J.M."/>
            <person name="Peterson J.D."/>
            <person name="Sadow P.W."/>
            <person name="Hanna M.C."/>
            <person name="Cotton M.D."/>
            <person name="Roberts K.M."/>
            <person name="Hurst M.A."/>
            <person name="Kaine B.P."/>
            <person name="Borodovsky M."/>
            <person name="Klenk H.-P."/>
            <person name="Fraser C.M."/>
            <person name="Smith H.O."/>
            <person name="Woese C.R."/>
            <person name="Venter J.C."/>
        </authorList>
    </citation>
    <scope>NUCLEOTIDE SEQUENCE [LARGE SCALE GENOMIC DNA]</scope>
    <source>
        <strain>ATCC 43067 / DSM 2661 / JAL-1 / JCM 10045 / NBRC 100440</strain>
    </source>
</reference>
<proteinExistence type="predicted"/>
<organism>
    <name type="scientific">Methanocaldococcus jannaschii (strain ATCC 43067 / DSM 2661 / JAL-1 / JCM 10045 / NBRC 100440)</name>
    <name type="common">Methanococcus jannaschii</name>
    <dbReference type="NCBI Taxonomy" id="243232"/>
    <lineage>
        <taxon>Archaea</taxon>
        <taxon>Methanobacteriati</taxon>
        <taxon>Methanobacteriota</taxon>
        <taxon>Methanomada group</taxon>
        <taxon>Methanococci</taxon>
        <taxon>Methanococcales</taxon>
        <taxon>Methanocaldococcaceae</taxon>
        <taxon>Methanocaldococcus</taxon>
    </lineage>
</organism>
<geneLocation type="plasmid">
    <name>large ECE</name>
</geneLocation>
<dbReference type="EMBL" id="L77118">
    <property type="protein sequence ID" value="AAC37090.1"/>
    <property type="molecule type" value="Genomic_DNA"/>
</dbReference>
<dbReference type="PIR" id="B64512">
    <property type="entry name" value="B64512"/>
</dbReference>
<dbReference type="RefSeq" id="WP_010890066.1">
    <property type="nucleotide sequence ID" value="NC_001732.1"/>
</dbReference>
<dbReference type="SMR" id="Q60279"/>
<dbReference type="PaxDb" id="243232-MJ_ECL19"/>
<dbReference type="EnsemblBacteria" id="AAC37090">
    <property type="protein sequence ID" value="AAC37090"/>
    <property type="gene ID" value="MJ_ECL19"/>
</dbReference>
<dbReference type="GeneID" id="1450803"/>
<dbReference type="KEGG" id="mja:MJ_ECL19"/>
<dbReference type="eggNOG" id="arCOG03827">
    <property type="taxonomic scope" value="Archaea"/>
</dbReference>
<dbReference type="HOGENOM" id="CLU_1536670_0_0_2"/>
<dbReference type="InParanoid" id="Q60279"/>
<dbReference type="PhylomeDB" id="Q60279"/>
<dbReference type="Proteomes" id="UP000000805">
    <property type="component" value="Plasmid pDSM2661_1"/>
</dbReference>
<dbReference type="Gene3D" id="1.25.40.10">
    <property type="entry name" value="Tetratricopeptide repeat domain"/>
    <property type="match status" value="2"/>
</dbReference>
<dbReference type="InterPro" id="IPR011990">
    <property type="entry name" value="TPR-like_helical_dom_sf"/>
</dbReference>
<dbReference type="InterPro" id="IPR019734">
    <property type="entry name" value="TPR_rpt"/>
</dbReference>
<dbReference type="Pfam" id="PF13174">
    <property type="entry name" value="TPR_6"/>
    <property type="match status" value="1"/>
</dbReference>
<dbReference type="SUPFAM" id="SSF48452">
    <property type="entry name" value="TPR-like"/>
    <property type="match status" value="1"/>
</dbReference>
<keyword id="KW-0614">Plasmid</keyword>
<keyword id="KW-1185">Reference proteome</keyword>
<sequence length="174" mass="20273">MESKEFDDDKIKIISMTPKSEKSDKIVMQIVEEFINSFPDDRYKFRVLLKVAELICKNGLCNEAFLILDKIPDSYYKSSALYKMADILYRNKEHDRLIQIAEKIPDDYKKSEVLLKVVELLCESGKYDEAINIAEKIPDNYYKSEALFKIAETLSNKGYYDKAVEIAEKIPDNF</sequence>
<name>Y3519_METJA</name>
<protein>
    <recommendedName>
        <fullName>Uncharacterized protein MJECL19</fullName>
    </recommendedName>
</protein>